<organism>
    <name type="scientific">Saimiriine herpesvirus 2 (strain 11)</name>
    <name type="common">SaHV-2</name>
    <name type="synonym">Herpesvirus saimiri</name>
    <dbReference type="NCBI Taxonomy" id="10383"/>
    <lineage>
        <taxon>Viruses</taxon>
        <taxon>Duplodnaviria</taxon>
        <taxon>Heunggongvirae</taxon>
        <taxon>Peploviricota</taxon>
        <taxon>Herviviricetes</taxon>
        <taxon>Herpesvirales</taxon>
        <taxon>Orthoherpesviridae</taxon>
        <taxon>Gammaherpesvirinae</taxon>
        <taxon>Rhadinovirus</taxon>
        <taxon>Rhadinovirus saimiriinegamma2</taxon>
        <taxon>Saimiriine herpesvirus 2</taxon>
    </lineage>
</organism>
<feature type="chain" id="PRO_0000116203" description="Putative transcription activator BRLF1 homolog">
    <location>
        <begin position="1"/>
        <end position="535"/>
    </location>
</feature>
<feature type="region of interest" description="Disordered" evidence="1">
    <location>
        <begin position="384"/>
        <end position="426"/>
    </location>
</feature>
<feature type="compositionally biased region" description="Basic residues" evidence="1">
    <location>
        <begin position="404"/>
        <end position="419"/>
    </location>
</feature>
<comment type="function">
    <text>Transcription activation. Regulates the delayed-early 110 kDa promoter.</text>
</comment>
<comment type="similarity">
    <text evidence="2">Belongs to the herpesviridae TAF50 family.</text>
</comment>
<comment type="sequence caution" evidence="2">
    <conflict type="erroneous initiation">
        <sequence resource="EMBL-CDS" id="AAA46124"/>
    </conflict>
</comment>
<comment type="sequence caution" evidence="2">
    <conflict type="erroneous initiation">
        <sequence resource="EMBL-CDS" id="AAA46159"/>
    </conflict>
</comment>
<comment type="sequence caution" evidence="2">
    <conflict type="erroneous initiation">
        <sequence resource="EMBL-CDS" id="CAA45672"/>
    </conflict>
</comment>
<keyword id="KW-0010">Activator</keyword>
<keyword id="KW-0238">DNA-binding</keyword>
<keyword id="KW-0244">Early protein</keyword>
<keyword id="KW-1185">Reference proteome</keyword>
<keyword id="KW-0804">Transcription</keyword>
<keyword id="KW-0805">Transcription regulation</keyword>
<evidence type="ECO:0000256" key="1">
    <source>
        <dbReference type="SAM" id="MobiDB-lite"/>
    </source>
</evidence>
<evidence type="ECO:0000305" key="2"/>
<proteinExistence type="evidence at protein level"/>
<gene>
    <name type="primary">50</name>
    <name type="synonym">EDRF1</name>
</gene>
<accession>Q01012</accession>
<protein>
    <recommendedName>
        <fullName>Putative transcription activator BRLF1 homolog</fullName>
    </recommendedName>
    <alternativeName>
        <fullName>Transcription activator EDRF1</fullName>
    </alternativeName>
</protein>
<organismHost>
    <name type="scientific">Saimiri sciureus</name>
    <name type="common">Common squirrel monkey</name>
    <dbReference type="NCBI Taxonomy" id="9521"/>
</organismHost>
<dbReference type="EMBL" id="X64346">
    <property type="protein sequence ID" value="CAA45672.1"/>
    <property type="status" value="ALT_INIT"/>
    <property type="molecule type" value="Genomic_DNA"/>
</dbReference>
<dbReference type="EMBL" id="M86409">
    <property type="protein sequence ID" value="AAA46124.1"/>
    <property type="status" value="ALT_INIT"/>
    <property type="molecule type" value="Genomic_DNA"/>
</dbReference>
<dbReference type="EMBL" id="M60850">
    <property type="protein sequence ID" value="AAA46159.1"/>
    <property type="status" value="ALT_INIT"/>
    <property type="molecule type" value="Genomic_DNA"/>
</dbReference>
<dbReference type="RefSeq" id="NP_040252.1">
    <property type="nucleotide sequence ID" value="NC_001350.1"/>
</dbReference>
<dbReference type="KEGG" id="vg:1682466"/>
<dbReference type="Proteomes" id="UP000000587">
    <property type="component" value="Segment"/>
</dbReference>
<dbReference type="GO" id="GO:0003677">
    <property type="term" value="F:DNA binding"/>
    <property type="evidence" value="ECO:0007669"/>
    <property type="project" value="UniProtKB-KW"/>
</dbReference>
<dbReference type="GO" id="GO:0006355">
    <property type="term" value="P:regulation of DNA-templated transcription"/>
    <property type="evidence" value="ECO:0007669"/>
    <property type="project" value="InterPro"/>
</dbReference>
<dbReference type="InterPro" id="IPR004998">
    <property type="entry name" value="Herpes_TAF50"/>
</dbReference>
<dbReference type="Pfam" id="PF03326">
    <property type="entry name" value="Herpes_TAF50"/>
    <property type="match status" value="1"/>
</dbReference>
<reference key="1">
    <citation type="journal article" date="1992" name="J. Virol.">
        <title>Primary structure of the herpesvirus saimiri genome.</title>
        <authorList>
            <person name="Albrecht J.-C."/>
            <person name="Nicholas J."/>
            <person name="Biller D."/>
            <person name="Cameron K.R."/>
            <person name="Biesinger B."/>
            <person name="Newman C."/>
            <person name="Wittmann S."/>
            <person name="Craxton M.A."/>
            <person name="Coleman H."/>
            <person name="Fleckenstein B."/>
            <person name="Honess R.W."/>
        </authorList>
    </citation>
    <scope>NUCLEOTIDE SEQUENCE [LARGE SCALE GENOMIC DNA]</scope>
</reference>
<reference key="2">
    <citation type="journal article" date="1992" name="Virology">
        <title>Analysis of nucleotide sequence of the rightmost 43 kbp of herpesvirus saimiri (HVS) L-DNA: general conservation of genetic organization between HVS and Epstein-Barr virus.</title>
        <authorList>
            <person name="Nicholas J."/>
            <person name="Cameron K.R."/>
            <person name="Coleman H."/>
            <person name="Newman C."/>
            <person name="Honess R.W."/>
        </authorList>
    </citation>
    <scope>NUCLEOTIDE SEQUENCE [GENOMIC DNA]</scope>
</reference>
<reference key="3">
    <citation type="journal article" date="1988" name="J. Virol.">
        <title>Regulation of the herpesvirus saimiri (HVS) delayed-early 110-kilodalton promoter by HVS immediate-early gene products and a homolog of the Epstein-Barr virus R trans activator.</title>
        <authorList>
            <person name="Nicholas J."/>
            <person name="Coles L.S."/>
            <person name="Newman C."/>
            <person name="Honess R.W."/>
        </authorList>
    </citation>
    <scope>NUCLEOTIDE SEQUENCE [GENOMIC DNA]</scope>
    <scope>CHARACTERIZATION</scope>
</reference>
<sequence length="535" mass="60051">MQRIPLWLVRSTHCLILLFQDDVQVRKSCLEPFLFLSPERKREIHQLLVAFNQSLVTPTQDEEKILSDIQRACLQIAEDLKHLNPFTGLLLDLNLYTLWTLLRNYKTKQRSQPVNSTVVSRYAHHVVKYIMQRLVYTTDRLFLTAPTSGIVLPVPLANAIFNLLSHCRKKCTGLWRNYGTEKSVLMGLGKEITLCYQALNESGIVSTTLAAFIKLSFPTISIPNLFKPMFQSCKGNQDNFPDICTQGSVIRRPHQGVFGDTFPIPDPLMREISENSFKKFSTANISTLLQNPKEILEMDPFDPRIGGFPLNKEETATPLKDSSFSNPTFINTGAANTLLPAASVTPALESLFSPTHFPCMSDESIASTSHVPLDNNISLPTLVKTNFPLKRKRQSRNIDPNTPRRPRGRPKGSKTKKRPTCSPALFQSSDIPTDSLHVKCPEMLPTVPQNEFCDSSNIQPCTSSSVLENDNLVPINEAETDDNILATILQDLYDLPAPPVLCSHENQTLEIDNNVDIEDLGLSFPMSLQDFLNDE</sequence>
<name>BRLF1_SHV21</name>